<sequence>MTQDISEKIEVISINDSQPEDSSPVVPHERQVVDCVIEIWKEDPSTESLGMSKLHALVKQKHPNWSISEKRVRSLLKQFGLAFNNQEQFTYAKEITSVMTPDIELPANVHIIMTSKRGKGLYAKRDIAKGDLIWSEEPLFFIPPLANVNLMKTASACTYCGKLLQRTESATVLKGLDCNVCSEVWCSIKCKHLDGNLHSLLKHNLYNPGSKKHKLIDAEAFLELQDYCLEEQWNALYAITLIYANCITDKSGVKQKQFDAMARVSQDVRYKALNSSAGTFDSLNGGALFVQEQQEHLWKIGYEKFLRVFPKKPVEYREFLFMMGTYNINNLDSNVFLTQSHLNHNCASNTSVETELNRTAGLKVIAGRDIKSGEELTTTYVNPSHTVHQRQRELRVNWGFICACAKCKDDLKQNERRKSSHNQQQNANNIRDMLKETKDAVGEEGIELEIPTEFNGERRKSVRFDEKVVAVKE</sequence>
<protein>
    <recommendedName>
        <fullName>Histone-lysine N-methyltransferase SET5</fullName>
        <ecNumber evidence="1">2.1.1.-</ecNumber>
    </recommendedName>
    <alternativeName>
        <fullName>SET domain-containing protein 5</fullName>
    </alternativeName>
</protein>
<name>SET5_CANAL</name>
<gene>
    <name type="primary">SET5</name>
    <name type="ordered locus">CAALFM_C500950CA</name>
    <name type="ORF">CaO19.1972</name>
    <name type="ORF">CaO19.9528</name>
</gene>
<keyword id="KW-0158">Chromosome</keyword>
<keyword id="KW-0963">Cytoplasm</keyword>
<keyword id="KW-0489">Methyltransferase</keyword>
<keyword id="KW-0539">Nucleus</keyword>
<keyword id="KW-1185">Reference proteome</keyword>
<keyword id="KW-0949">S-adenosyl-L-methionine</keyword>
<keyword id="KW-0808">Transferase</keyword>
<feature type="chain" id="PRO_0000324465" description="Histone-lysine N-methyltransferase SET5">
    <location>
        <begin position="1"/>
        <end position="473"/>
    </location>
</feature>
<feature type="domain" description="SET" evidence="2">
    <location>
        <begin position="107"/>
        <end position="381"/>
    </location>
</feature>
<proteinExistence type="inferred from homology"/>
<dbReference type="EC" id="2.1.1.-" evidence="1"/>
<dbReference type="EMBL" id="CP017627">
    <property type="protein sequence ID" value="AOW29537.1"/>
    <property type="molecule type" value="Genomic_DNA"/>
</dbReference>
<dbReference type="RefSeq" id="XP_715734.2">
    <property type="nucleotide sequence ID" value="XM_710641.2"/>
</dbReference>
<dbReference type="FunCoup" id="Q5A1M3">
    <property type="interactions" value="708"/>
</dbReference>
<dbReference type="STRING" id="237561.Q5A1M3"/>
<dbReference type="EnsemblFungi" id="C5_00950C_A-T">
    <property type="protein sequence ID" value="C5_00950C_A-T-p1"/>
    <property type="gene ID" value="C5_00950C_A"/>
</dbReference>
<dbReference type="GeneID" id="3642653"/>
<dbReference type="KEGG" id="cal:CAALFM_C500950CA"/>
<dbReference type="CGD" id="CAL0000174761">
    <property type="gene designation" value="SET5"/>
</dbReference>
<dbReference type="VEuPathDB" id="FungiDB:C5_00950C_A"/>
<dbReference type="eggNOG" id="KOG2084">
    <property type="taxonomic scope" value="Eukaryota"/>
</dbReference>
<dbReference type="HOGENOM" id="CLU_031650_0_0_1"/>
<dbReference type="InParanoid" id="Q5A1M3"/>
<dbReference type="OrthoDB" id="438641at2759"/>
<dbReference type="PRO" id="PR:Q5A1M3"/>
<dbReference type="Proteomes" id="UP000000559">
    <property type="component" value="Chromosome 5"/>
</dbReference>
<dbReference type="GO" id="GO:0005694">
    <property type="term" value="C:chromosome"/>
    <property type="evidence" value="ECO:0007669"/>
    <property type="project" value="UniProtKB-SubCell"/>
</dbReference>
<dbReference type="GO" id="GO:0005737">
    <property type="term" value="C:cytoplasm"/>
    <property type="evidence" value="ECO:0007669"/>
    <property type="project" value="UniProtKB-SubCell"/>
</dbReference>
<dbReference type="GO" id="GO:0005634">
    <property type="term" value="C:nucleus"/>
    <property type="evidence" value="ECO:0007669"/>
    <property type="project" value="UniProtKB-SubCell"/>
</dbReference>
<dbReference type="GO" id="GO:0042799">
    <property type="term" value="F:histone H4K20 methyltransferase activity"/>
    <property type="evidence" value="ECO:0000318"/>
    <property type="project" value="GO_Central"/>
</dbReference>
<dbReference type="GO" id="GO:0032259">
    <property type="term" value="P:methylation"/>
    <property type="evidence" value="ECO:0007669"/>
    <property type="project" value="UniProtKB-KW"/>
</dbReference>
<dbReference type="GO" id="GO:0045814">
    <property type="term" value="P:negative regulation of gene expression, epigenetic"/>
    <property type="evidence" value="ECO:0000318"/>
    <property type="project" value="GO_Central"/>
</dbReference>
<dbReference type="CDD" id="cd20071">
    <property type="entry name" value="SET_SMYD"/>
    <property type="match status" value="1"/>
</dbReference>
<dbReference type="Gene3D" id="1.10.220.160">
    <property type="match status" value="1"/>
</dbReference>
<dbReference type="Gene3D" id="6.10.140.2220">
    <property type="match status" value="1"/>
</dbReference>
<dbReference type="Gene3D" id="2.170.270.10">
    <property type="entry name" value="SET domain"/>
    <property type="match status" value="1"/>
</dbReference>
<dbReference type="InterPro" id="IPR001214">
    <property type="entry name" value="SET_dom"/>
</dbReference>
<dbReference type="InterPro" id="IPR046341">
    <property type="entry name" value="SET_dom_sf"/>
</dbReference>
<dbReference type="PANTHER" id="PTHR46402:SF2">
    <property type="entry name" value="HISTONE-LYSINE N-TRIMETHYLTRANSFERASE SMYD5"/>
    <property type="match status" value="1"/>
</dbReference>
<dbReference type="PANTHER" id="PTHR46402">
    <property type="entry name" value="SET AND MYND DOMAIN-CONTAINING PROTEIN 5"/>
    <property type="match status" value="1"/>
</dbReference>
<dbReference type="Pfam" id="PF00856">
    <property type="entry name" value="SET"/>
    <property type="match status" value="1"/>
</dbReference>
<dbReference type="SUPFAM" id="SSF82199">
    <property type="entry name" value="SET domain"/>
    <property type="match status" value="1"/>
</dbReference>
<dbReference type="PROSITE" id="PS50280">
    <property type="entry name" value="SET"/>
    <property type="match status" value="1"/>
</dbReference>
<comment type="function">
    <text evidence="1">Histone methyltransferase that monomethylates 'Lys-5', 'Lys-8' and 'Lys-12' of histone H4 (H4K5me1, H4K8me1 and H4K12me1, respectively), thereby controlling gene expression and remodeling chromatin structures.</text>
</comment>
<comment type="catalytic activity">
    <reaction evidence="1">
        <text>L-lysyl-[histone] + S-adenosyl-L-methionine = N(6)-methyl-L-lysyl-[histone] + S-adenosyl-L-homocysteine + H(+)</text>
        <dbReference type="Rhea" id="RHEA:10024"/>
        <dbReference type="Rhea" id="RHEA-COMP:9845"/>
        <dbReference type="Rhea" id="RHEA-COMP:9846"/>
        <dbReference type="ChEBI" id="CHEBI:15378"/>
        <dbReference type="ChEBI" id="CHEBI:29969"/>
        <dbReference type="ChEBI" id="CHEBI:57856"/>
        <dbReference type="ChEBI" id="CHEBI:59789"/>
        <dbReference type="ChEBI" id="CHEBI:61929"/>
    </reaction>
    <physiologicalReaction direction="left-to-right" evidence="1">
        <dbReference type="Rhea" id="RHEA:10025"/>
    </physiologicalReaction>
</comment>
<comment type="subcellular location">
    <subcellularLocation>
        <location evidence="1">Nucleus</location>
    </subcellularLocation>
    <subcellularLocation>
        <location evidence="1">Chromosome</location>
    </subcellularLocation>
    <subcellularLocation>
        <location evidence="1">Cytoplasm</location>
    </subcellularLocation>
</comment>
<comment type="similarity">
    <text evidence="2">Belongs to the class V-like SAM-binding methyltransferase superfamily. Histone-lysine methyltransferase family. SET5 subfamily.</text>
</comment>
<evidence type="ECO:0000250" key="1">
    <source>
        <dbReference type="UniProtKB" id="P38890"/>
    </source>
</evidence>
<evidence type="ECO:0000255" key="2">
    <source>
        <dbReference type="PROSITE-ProRule" id="PRU00190"/>
    </source>
</evidence>
<organism>
    <name type="scientific">Candida albicans (strain SC5314 / ATCC MYA-2876)</name>
    <name type="common">Yeast</name>
    <dbReference type="NCBI Taxonomy" id="237561"/>
    <lineage>
        <taxon>Eukaryota</taxon>
        <taxon>Fungi</taxon>
        <taxon>Dikarya</taxon>
        <taxon>Ascomycota</taxon>
        <taxon>Saccharomycotina</taxon>
        <taxon>Pichiomycetes</taxon>
        <taxon>Debaryomycetaceae</taxon>
        <taxon>Candida/Lodderomyces clade</taxon>
        <taxon>Candida</taxon>
    </lineage>
</organism>
<reference key="1">
    <citation type="journal article" date="2004" name="Proc. Natl. Acad. Sci. U.S.A.">
        <title>The diploid genome sequence of Candida albicans.</title>
        <authorList>
            <person name="Jones T."/>
            <person name="Federspiel N.A."/>
            <person name="Chibana H."/>
            <person name="Dungan J."/>
            <person name="Kalman S."/>
            <person name="Magee B.B."/>
            <person name="Newport G."/>
            <person name="Thorstenson Y.R."/>
            <person name="Agabian N."/>
            <person name="Magee P.T."/>
            <person name="Davis R.W."/>
            <person name="Scherer S."/>
        </authorList>
    </citation>
    <scope>NUCLEOTIDE SEQUENCE [LARGE SCALE GENOMIC DNA]</scope>
    <source>
        <strain>SC5314 / ATCC MYA-2876</strain>
    </source>
</reference>
<reference key="2">
    <citation type="journal article" date="2007" name="Genome Biol.">
        <title>Assembly of the Candida albicans genome into sixteen supercontigs aligned on the eight chromosomes.</title>
        <authorList>
            <person name="van het Hoog M."/>
            <person name="Rast T.J."/>
            <person name="Martchenko M."/>
            <person name="Grindle S."/>
            <person name="Dignard D."/>
            <person name="Hogues H."/>
            <person name="Cuomo C."/>
            <person name="Berriman M."/>
            <person name="Scherer S."/>
            <person name="Magee B.B."/>
            <person name="Whiteway M."/>
            <person name="Chibana H."/>
            <person name="Nantel A."/>
            <person name="Magee P.T."/>
        </authorList>
    </citation>
    <scope>GENOME REANNOTATION</scope>
    <source>
        <strain>SC5314 / ATCC MYA-2876</strain>
    </source>
</reference>
<reference key="3">
    <citation type="journal article" date="2013" name="Genome Biol.">
        <title>Assembly of a phased diploid Candida albicans genome facilitates allele-specific measurements and provides a simple model for repeat and indel structure.</title>
        <authorList>
            <person name="Muzzey D."/>
            <person name="Schwartz K."/>
            <person name="Weissman J.S."/>
            <person name="Sherlock G."/>
        </authorList>
    </citation>
    <scope>NUCLEOTIDE SEQUENCE [LARGE SCALE GENOMIC DNA]</scope>
    <scope>GENOME REANNOTATION</scope>
    <source>
        <strain>SC5314 / ATCC MYA-2876</strain>
    </source>
</reference>
<accession>Q5A1M3</accession>
<accession>A0A1D8PN29</accession>